<sequence>MARSLKKGPFVDDHVMKKVIAAKKANDNKPIKTWSRRSTITPDMIGLTFNVHNGKSFIPVYITENHIGYKLGEFAPTRTFKGHKGSVQKKIGK</sequence>
<organism>
    <name type="scientific">Campylobacter jejuni subsp. jejuni serotype O:23/36 (strain 81-176)</name>
    <dbReference type="NCBI Taxonomy" id="354242"/>
    <lineage>
        <taxon>Bacteria</taxon>
        <taxon>Pseudomonadati</taxon>
        <taxon>Campylobacterota</taxon>
        <taxon>Epsilonproteobacteria</taxon>
        <taxon>Campylobacterales</taxon>
        <taxon>Campylobacteraceae</taxon>
        <taxon>Campylobacter</taxon>
    </lineage>
</organism>
<reference key="1">
    <citation type="submission" date="2006-12" db="EMBL/GenBank/DDBJ databases">
        <authorList>
            <person name="Fouts D.E."/>
            <person name="Nelson K.E."/>
            <person name="Sebastian Y."/>
        </authorList>
    </citation>
    <scope>NUCLEOTIDE SEQUENCE [LARGE SCALE GENOMIC DNA]</scope>
    <source>
        <strain>81-176</strain>
    </source>
</reference>
<keyword id="KW-0687">Ribonucleoprotein</keyword>
<keyword id="KW-0689">Ribosomal protein</keyword>
<keyword id="KW-0694">RNA-binding</keyword>
<keyword id="KW-0699">rRNA-binding</keyword>
<proteinExistence type="inferred from homology"/>
<feature type="chain" id="PRO_1000051033" description="Small ribosomal subunit protein uS19">
    <location>
        <begin position="1"/>
        <end position="93"/>
    </location>
</feature>
<dbReference type="EMBL" id="CP000538">
    <property type="protein sequence ID" value="EAQ72555.1"/>
    <property type="molecule type" value="Genomic_DNA"/>
</dbReference>
<dbReference type="RefSeq" id="WP_002851509.1">
    <property type="nucleotide sequence ID" value="NC_008787.1"/>
</dbReference>
<dbReference type="SMR" id="A1W1V6"/>
<dbReference type="KEGG" id="cjj:CJJ81176_1700"/>
<dbReference type="eggNOG" id="COG0185">
    <property type="taxonomic scope" value="Bacteria"/>
</dbReference>
<dbReference type="HOGENOM" id="CLU_144911_0_1_7"/>
<dbReference type="Proteomes" id="UP000000646">
    <property type="component" value="Chromosome"/>
</dbReference>
<dbReference type="GO" id="GO:0005737">
    <property type="term" value="C:cytoplasm"/>
    <property type="evidence" value="ECO:0007669"/>
    <property type="project" value="UniProtKB-ARBA"/>
</dbReference>
<dbReference type="GO" id="GO:0015935">
    <property type="term" value="C:small ribosomal subunit"/>
    <property type="evidence" value="ECO:0007669"/>
    <property type="project" value="InterPro"/>
</dbReference>
<dbReference type="GO" id="GO:0019843">
    <property type="term" value="F:rRNA binding"/>
    <property type="evidence" value="ECO:0007669"/>
    <property type="project" value="UniProtKB-UniRule"/>
</dbReference>
<dbReference type="GO" id="GO:0003735">
    <property type="term" value="F:structural constituent of ribosome"/>
    <property type="evidence" value="ECO:0007669"/>
    <property type="project" value="InterPro"/>
</dbReference>
<dbReference type="GO" id="GO:0000028">
    <property type="term" value="P:ribosomal small subunit assembly"/>
    <property type="evidence" value="ECO:0007669"/>
    <property type="project" value="TreeGrafter"/>
</dbReference>
<dbReference type="GO" id="GO:0006412">
    <property type="term" value="P:translation"/>
    <property type="evidence" value="ECO:0007669"/>
    <property type="project" value="UniProtKB-UniRule"/>
</dbReference>
<dbReference type="FunFam" id="3.30.860.10:FF:000001">
    <property type="entry name" value="30S ribosomal protein S19"/>
    <property type="match status" value="1"/>
</dbReference>
<dbReference type="Gene3D" id="3.30.860.10">
    <property type="entry name" value="30s Ribosomal Protein S19, Chain A"/>
    <property type="match status" value="1"/>
</dbReference>
<dbReference type="HAMAP" id="MF_00531">
    <property type="entry name" value="Ribosomal_uS19"/>
    <property type="match status" value="1"/>
</dbReference>
<dbReference type="InterPro" id="IPR002222">
    <property type="entry name" value="Ribosomal_uS19"/>
</dbReference>
<dbReference type="InterPro" id="IPR005732">
    <property type="entry name" value="Ribosomal_uS19_bac-type"/>
</dbReference>
<dbReference type="InterPro" id="IPR020934">
    <property type="entry name" value="Ribosomal_uS19_CS"/>
</dbReference>
<dbReference type="InterPro" id="IPR023575">
    <property type="entry name" value="Ribosomal_uS19_SF"/>
</dbReference>
<dbReference type="NCBIfam" id="TIGR01050">
    <property type="entry name" value="rpsS_bact"/>
    <property type="match status" value="1"/>
</dbReference>
<dbReference type="PANTHER" id="PTHR11880">
    <property type="entry name" value="RIBOSOMAL PROTEIN S19P FAMILY MEMBER"/>
    <property type="match status" value="1"/>
</dbReference>
<dbReference type="PANTHER" id="PTHR11880:SF8">
    <property type="entry name" value="SMALL RIBOSOMAL SUBUNIT PROTEIN US19M"/>
    <property type="match status" value="1"/>
</dbReference>
<dbReference type="Pfam" id="PF00203">
    <property type="entry name" value="Ribosomal_S19"/>
    <property type="match status" value="1"/>
</dbReference>
<dbReference type="PIRSF" id="PIRSF002144">
    <property type="entry name" value="Ribosomal_S19"/>
    <property type="match status" value="1"/>
</dbReference>
<dbReference type="PRINTS" id="PR00975">
    <property type="entry name" value="RIBOSOMALS19"/>
</dbReference>
<dbReference type="SUPFAM" id="SSF54570">
    <property type="entry name" value="Ribosomal protein S19"/>
    <property type="match status" value="1"/>
</dbReference>
<dbReference type="PROSITE" id="PS00323">
    <property type="entry name" value="RIBOSOMAL_S19"/>
    <property type="match status" value="1"/>
</dbReference>
<gene>
    <name evidence="1" type="primary">rpsS</name>
    <name type="ordered locus">CJJ81176_1700</name>
</gene>
<protein>
    <recommendedName>
        <fullName evidence="1">Small ribosomal subunit protein uS19</fullName>
    </recommendedName>
    <alternativeName>
        <fullName evidence="2">30S ribosomal protein S19</fullName>
    </alternativeName>
</protein>
<evidence type="ECO:0000255" key="1">
    <source>
        <dbReference type="HAMAP-Rule" id="MF_00531"/>
    </source>
</evidence>
<evidence type="ECO:0000305" key="2"/>
<accession>A1W1V6</accession>
<comment type="function">
    <text evidence="1">Protein S19 forms a complex with S13 that binds strongly to the 16S ribosomal RNA.</text>
</comment>
<comment type="similarity">
    <text evidence="1">Belongs to the universal ribosomal protein uS19 family.</text>
</comment>
<name>RS19_CAMJJ</name>